<accession>Q5YRZ6</accession>
<evidence type="ECO:0000255" key="1">
    <source>
        <dbReference type="HAMAP-Rule" id="MF_00373"/>
    </source>
</evidence>
<evidence type="ECO:0000305" key="2"/>
<protein>
    <recommendedName>
        <fullName evidence="1">Large ribosomal subunit protein bL28A</fullName>
    </recommendedName>
    <alternativeName>
        <fullName evidence="2">50S ribosomal protein L28 1</fullName>
    </alternativeName>
</protein>
<feature type="chain" id="PRO_0000178518" description="Large ribosomal subunit protein bL28A">
    <location>
        <begin position="1"/>
        <end position="63"/>
    </location>
</feature>
<comment type="similarity">
    <text evidence="1">Belongs to the bacterial ribosomal protein bL28 family.</text>
</comment>
<name>RL281_NOCFA</name>
<gene>
    <name evidence="1" type="primary">rpmB1</name>
    <name type="ordered locus">NFA_41960</name>
</gene>
<dbReference type="EMBL" id="AP006618">
    <property type="protein sequence ID" value="BAD59045.1"/>
    <property type="molecule type" value="Genomic_DNA"/>
</dbReference>
<dbReference type="SMR" id="Q5YRZ6"/>
<dbReference type="STRING" id="247156.NFA_41960"/>
<dbReference type="KEGG" id="nfa:NFA_41960"/>
<dbReference type="eggNOG" id="COG0227">
    <property type="taxonomic scope" value="Bacteria"/>
</dbReference>
<dbReference type="HOGENOM" id="CLU_064548_7_0_11"/>
<dbReference type="OrthoDB" id="9805609at2"/>
<dbReference type="Proteomes" id="UP000006820">
    <property type="component" value="Chromosome"/>
</dbReference>
<dbReference type="GO" id="GO:1990904">
    <property type="term" value="C:ribonucleoprotein complex"/>
    <property type="evidence" value="ECO:0007669"/>
    <property type="project" value="UniProtKB-KW"/>
</dbReference>
<dbReference type="GO" id="GO:0005840">
    <property type="term" value="C:ribosome"/>
    <property type="evidence" value="ECO:0007669"/>
    <property type="project" value="UniProtKB-KW"/>
</dbReference>
<dbReference type="GO" id="GO:0003735">
    <property type="term" value="F:structural constituent of ribosome"/>
    <property type="evidence" value="ECO:0007669"/>
    <property type="project" value="InterPro"/>
</dbReference>
<dbReference type="GO" id="GO:0006412">
    <property type="term" value="P:translation"/>
    <property type="evidence" value="ECO:0007669"/>
    <property type="project" value="UniProtKB-UniRule"/>
</dbReference>
<dbReference type="Gene3D" id="2.30.170.40">
    <property type="entry name" value="Ribosomal protein L28/L24"/>
    <property type="match status" value="1"/>
</dbReference>
<dbReference type="HAMAP" id="MF_00373">
    <property type="entry name" value="Ribosomal_bL28"/>
    <property type="match status" value="1"/>
</dbReference>
<dbReference type="InterPro" id="IPR050096">
    <property type="entry name" value="Bacterial_rp_bL28"/>
</dbReference>
<dbReference type="InterPro" id="IPR026569">
    <property type="entry name" value="Ribosomal_bL28"/>
</dbReference>
<dbReference type="InterPro" id="IPR034704">
    <property type="entry name" value="Ribosomal_bL28/bL31-like_sf"/>
</dbReference>
<dbReference type="InterPro" id="IPR001383">
    <property type="entry name" value="Ribosomal_bL28_bact-type"/>
</dbReference>
<dbReference type="InterPro" id="IPR037147">
    <property type="entry name" value="Ribosomal_bL28_sf"/>
</dbReference>
<dbReference type="NCBIfam" id="TIGR00009">
    <property type="entry name" value="L28"/>
    <property type="match status" value="1"/>
</dbReference>
<dbReference type="PANTHER" id="PTHR39080">
    <property type="entry name" value="50S RIBOSOMAL PROTEIN L28"/>
    <property type="match status" value="1"/>
</dbReference>
<dbReference type="PANTHER" id="PTHR39080:SF1">
    <property type="entry name" value="LARGE RIBOSOMAL SUBUNIT PROTEIN BL28A"/>
    <property type="match status" value="1"/>
</dbReference>
<dbReference type="Pfam" id="PF00830">
    <property type="entry name" value="Ribosomal_L28"/>
    <property type="match status" value="1"/>
</dbReference>
<dbReference type="SUPFAM" id="SSF143800">
    <property type="entry name" value="L28p-like"/>
    <property type="match status" value="1"/>
</dbReference>
<keyword id="KW-1185">Reference proteome</keyword>
<keyword id="KW-0687">Ribonucleoprotein</keyword>
<keyword id="KW-0689">Ribosomal protein</keyword>
<proteinExistence type="inferred from homology"/>
<organism>
    <name type="scientific">Nocardia farcinica (strain IFM 10152)</name>
    <dbReference type="NCBI Taxonomy" id="247156"/>
    <lineage>
        <taxon>Bacteria</taxon>
        <taxon>Bacillati</taxon>
        <taxon>Actinomycetota</taxon>
        <taxon>Actinomycetes</taxon>
        <taxon>Mycobacteriales</taxon>
        <taxon>Nocardiaceae</taxon>
        <taxon>Nocardia</taxon>
    </lineage>
</organism>
<sequence length="63" mass="6837">MAAVCDVCAKGPGFGKSVSHSHRRTNRRWNPNIQTVRAQVAPGNTRRMNVCTSCLKAGKVVRG</sequence>
<reference key="1">
    <citation type="journal article" date="2004" name="Proc. Natl. Acad. Sci. U.S.A.">
        <title>The complete genomic sequence of Nocardia farcinica IFM 10152.</title>
        <authorList>
            <person name="Ishikawa J."/>
            <person name="Yamashita A."/>
            <person name="Mikami Y."/>
            <person name="Hoshino Y."/>
            <person name="Kurita H."/>
            <person name="Hotta K."/>
            <person name="Shiba T."/>
            <person name="Hattori M."/>
        </authorList>
    </citation>
    <scope>NUCLEOTIDE SEQUENCE [LARGE SCALE GENOMIC DNA]</scope>
    <source>
        <strain>IFM 10152</strain>
    </source>
</reference>